<evidence type="ECO:0000255" key="1">
    <source>
        <dbReference type="HAMAP-Rule" id="MF_00124"/>
    </source>
</evidence>
<evidence type="ECO:0000256" key="2">
    <source>
        <dbReference type="SAM" id="MobiDB-lite"/>
    </source>
</evidence>
<comment type="catalytic activity">
    <reaction evidence="1">
        <text>thymidine + ATP = dTMP + ADP + H(+)</text>
        <dbReference type="Rhea" id="RHEA:19129"/>
        <dbReference type="ChEBI" id="CHEBI:15378"/>
        <dbReference type="ChEBI" id="CHEBI:17748"/>
        <dbReference type="ChEBI" id="CHEBI:30616"/>
        <dbReference type="ChEBI" id="CHEBI:63528"/>
        <dbReference type="ChEBI" id="CHEBI:456216"/>
        <dbReference type="EC" id="2.7.1.21"/>
    </reaction>
</comment>
<comment type="subunit">
    <text evidence="1">Homotetramer.</text>
</comment>
<comment type="subcellular location">
    <subcellularLocation>
        <location evidence="1">Cytoplasm</location>
    </subcellularLocation>
</comment>
<comment type="similarity">
    <text evidence="1">Belongs to the thymidine kinase family.</text>
</comment>
<reference key="1">
    <citation type="journal article" date="2004" name="Nucleic Acids Res.">
        <title>Thermoadaptation trait revealed by the genome sequence of thermophilic Geobacillus kaustophilus.</title>
        <authorList>
            <person name="Takami H."/>
            <person name="Takaki Y."/>
            <person name="Chee G.-J."/>
            <person name="Nishi S."/>
            <person name="Shimamura S."/>
            <person name="Suzuki H."/>
            <person name="Matsui S."/>
            <person name="Uchiyama I."/>
        </authorList>
    </citation>
    <scope>NUCLEOTIDE SEQUENCE [LARGE SCALE GENOMIC DNA]</scope>
    <source>
        <strain>HTA426</strain>
    </source>
</reference>
<proteinExistence type="inferred from homology"/>
<dbReference type="EC" id="2.7.1.21" evidence="1"/>
<dbReference type="EMBL" id="BA000043">
    <property type="protein sequence ID" value="BAD77665.1"/>
    <property type="molecule type" value="Genomic_DNA"/>
</dbReference>
<dbReference type="RefSeq" id="WP_011232847.1">
    <property type="nucleotide sequence ID" value="NC_006510.1"/>
</dbReference>
<dbReference type="SMR" id="Q5KUH1"/>
<dbReference type="STRING" id="235909.GK3380"/>
<dbReference type="KEGG" id="gka:GK3380"/>
<dbReference type="eggNOG" id="COG1435">
    <property type="taxonomic scope" value="Bacteria"/>
</dbReference>
<dbReference type="HOGENOM" id="CLU_064400_3_0_9"/>
<dbReference type="Proteomes" id="UP000001172">
    <property type="component" value="Chromosome"/>
</dbReference>
<dbReference type="GO" id="GO:0005829">
    <property type="term" value="C:cytosol"/>
    <property type="evidence" value="ECO:0007669"/>
    <property type="project" value="TreeGrafter"/>
</dbReference>
<dbReference type="GO" id="GO:0005524">
    <property type="term" value="F:ATP binding"/>
    <property type="evidence" value="ECO:0007669"/>
    <property type="project" value="UniProtKB-UniRule"/>
</dbReference>
<dbReference type="GO" id="GO:0004797">
    <property type="term" value="F:thymidine kinase activity"/>
    <property type="evidence" value="ECO:0007669"/>
    <property type="project" value="UniProtKB-UniRule"/>
</dbReference>
<dbReference type="GO" id="GO:0008270">
    <property type="term" value="F:zinc ion binding"/>
    <property type="evidence" value="ECO:0007669"/>
    <property type="project" value="UniProtKB-UniRule"/>
</dbReference>
<dbReference type="GO" id="GO:0071897">
    <property type="term" value="P:DNA biosynthetic process"/>
    <property type="evidence" value="ECO:0007669"/>
    <property type="project" value="UniProtKB-KW"/>
</dbReference>
<dbReference type="GO" id="GO:0046104">
    <property type="term" value="P:thymidine metabolic process"/>
    <property type="evidence" value="ECO:0007669"/>
    <property type="project" value="TreeGrafter"/>
</dbReference>
<dbReference type="FunFam" id="3.30.60.20:FF:000026">
    <property type="entry name" value="Thymidine kinase"/>
    <property type="match status" value="1"/>
</dbReference>
<dbReference type="FunFam" id="3.40.50.300:FF:000384">
    <property type="entry name" value="Thymidine kinase"/>
    <property type="match status" value="1"/>
</dbReference>
<dbReference type="Gene3D" id="3.30.60.20">
    <property type="match status" value="1"/>
</dbReference>
<dbReference type="Gene3D" id="3.40.50.300">
    <property type="entry name" value="P-loop containing nucleotide triphosphate hydrolases"/>
    <property type="match status" value="1"/>
</dbReference>
<dbReference type="HAMAP" id="MF_00124">
    <property type="entry name" value="Thymidine_kinase"/>
    <property type="match status" value="1"/>
</dbReference>
<dbReference type="InterPro" id="IPR027417">
    <property type="entry name" value="P-loop_NTPase"/>
</dbReference>
<dbReference type="InterPro" id="IPR001267">
    <property type="entry name" value="Thymidine_kinase"/>
</dbReference>
<dbReference type="InterPro" id="IPR020633">
    <property type="entry name" value="Thymidine_kinase_CS"/>
</dbReference>
<dbReference type="NCBIfam" id="NF003296">
    <property type="entry name" value="PRK04296.1-1"/>
    <property type="match status" value="1"/>
</dbReference>
<dbReference type="PANTHER" id="PTHR11441">
    <property type="entry name" value="THYMIDINE KINASE"/>
    <property type="match status" value="1"/>
</dbReference>
<dbReference type="PANTHER" id="PTHR11441:SF0">
    <property type="entry name" value="THYMIDINE KINASE, CYTOSOLIC"/>
    <property type="match status" value="1"/>
</dbReference>
<dbReference type="Pfam" id="PF00265">
    <property type="entry name" value="TK"/>
    <property type="match status" value="1"/>
</dbReference>
<dbReference type="PIRSF" id="PIRSF035805">
    <property type="entry name" value="TK_cell"/>
    <property type="match status" value="1"/>
</dbReference>
<dbReference type="SUPFAM" id="SSF57716">
    <property type="entry name" value="Glucocorticoid receptor-like (DNA-binding domain)"/>
    <property type="match status" value="1"/>
</dbReference>
<dbReference type="SUPFAM" id="SSF52540">
    <property type="entry name" value="P-loop containing nucleoside triphosphate hydrolases"/>
    <property type="match status" value="1"/>
</dbReference>
<dbReference type="PROSITE" id="PS00603">
    <property type="entry name" value="TK_CELLULAR_TYPE"/>
    <property type="match status" value="1"/>
</dbReference>
<feature type="chain" id="PRO_0000174977" description="Thymidine kinase">
    <location>
        <begin position="1"/>
        <end position="207"/>
    </location>
</feature>
<feature type="region of interest" description="Disordered" evidence="2">
    <location>
        <begin position="184"/>
        <end position="207"/>
    </location>
</feature>
<feature type="compositionally biased region" description="Basic residues" evidence="2">
    <location>
        <begin position="184"/>
        <end position="198"/>
    </location>
</feature>
<feature type="active site" description="Proton acceptor" evidence="1">
    <location>
        <position position="89"/>
    </location>
</feature>
<feature type="binding site" evidence="1">
    <location>
        <begin position="15"/>
        <end position="22"/>
    </location>
    <ligand>
        <name>ATP</name>
        <dbReference type="ChEBI" id="CHEBI:30616"/>
    </ligand>
</feature>
<feature type="binding site" evidence="1">
    <location>
        <begin position="88"/>
        <end position="91"/>
    </location>
    <ligand>
        <name>ATP</name>
        <dbReference type="ChEBI" id="CHEBI:30616"/>
    </ligand>
</feature>
<feature type="binding site" evidence="1">
    <location>
        <position position="145"/>
    </location>
    <ligand>
        <name>Zn(2+)</name>
        <dbReference type="ChEBI" id="CHEBI:29105"/>
    </ligand>
</feature>
<feature type="binding site" evidence="1">
    <location>
        <position position="148"/>
    </location>
    <ligand>
        <name>Zn(2+)</name>
        <dbReference type="ChEBI" id="CHEBI:29105"/>
    </ligand>
</feature>
<feature type="binding site" evidence="1">
    <location>
        <position position="183"/>
    </location>
    <ligand>
        <name>Zn(2+)</name>
        <dbReference type="ChEBI" id="CHEBI:29105"/>
    </ligand>
</feature>
<feature type="binding site" evidence="1">
    <location>
        <position position="186"/>
    </location>
    <ligand>
        <name>Zn(2+)</name>
        <dbReference type="ChEBI" id="CHEBI:29105"/>
    </ligand>
</feature>
<keyword id="KW-0067">ATP-binding</keyword>
<keyword id="KW-0963">Cytoplasm</keyword>
<keyword id="KW-0237">DNA synthesis</keyword>
<keyword id="KW-0418">Kinase</keyword>
<keyword id="KW-0479">Metal-binding</keyword>
<keyword id="KW-0547">Nucleotide-binding</keyword>
<keyword id="KW-1185">Reference proteome</keyword>
<keyword id="KW-0808">Transferase</keyword>
<keyword id="KW-0862">Zinc</keyword>
<organism>
    <name type="scientific">Geobacillus kaustophilus (strain HTA426)</name>
    <dbReference type="NCBI Taxonomy" id="235909"/>
    <lineage>
        <taxon>Bacteria</taxon>
        <taxon>Bacillati</taxon>
        <taxon>Bacillota</taxon>
        <taxon>Bacilli</taxon>
        <taxon>Bacillales</taxon>
        <taxon>Anoxybacillaceae</taxon>
        <taxon>Geobacillus</taxon>
        <taxon>Geobacillus thermoleovorans group</taxon>
    </lineage>
</organism>
<accession>Q5KUH1</accession>
<sequence>MYVMTQSGWLELICGCMFSGKSEELIRRVRRAQFAKQEVKVFKPTIDNRYSEDAVVSHNGNSVIAIPVATPAEMFRYISAATDVVAIDEIQFFSDDIIDVVQTLADCGYRVIAAGLDQDFRGEPFGPVPALMAIAESVTKLQAVCTVCGSPASRTQRLINGAPASYDDPVILVGASEAYEPRCRHHHEVPGKPKKRYNHPLAGHTGE</sequence>
<protein>
    <recommendedName>
        <fullName evidence="1">Thymidine kinase</fullName>
        <ecNumber evidence="1">2.7.1.21</ecNumber>
    </recommendedName>
</protein>
<name>KITH_GEOKA</name>
<gene>
    <name evidence="1" type="primary">tdk</name>
    <name type="ordered locus">GK3380</name>
</gene>